<feature type="chain" id="PRO_0000138090" description="Glycerol-3-phosphate dehydrogenase [NAD(+)]">
    <location>
        <begin position="1"/>
        <end position="411"/>
    </location>
</feature>
<feature type="active site" description="Proton acceptor" evidence="1">
    <location>
        <position position="275"/>
    </location>
</feature>
<feature type="binding site" evidence="1">
    <location>
        <begin position="71"/>
        <end position="76"/>
    </location>
    <ligand>
        <name>NAD(+)</name>
        <dbReference type="ChEBI" id="CHEBI:57540"/>
    </ligand>
</feature>
<feature type="binding site" evidence="1">
    <location>
        <position position="103"/>
    </location>
    <ligand>
        <name>NAD(+)</name>
        <dbReference type="ChEBI" id="CHEBI:57540"/>
    </ligand>
</feature>
<feature type="binding site" evidence="1">
    <location>
        <position position="159"/>
    </location>
    <ligand>
        <name>NAD(+)</name>
        <dbReference type="ChEBI" id="CHEBI:57540"/>
    </ligand>
</feature>
<feature type="binding site" evidence="1">
    <location>
        <position position="182"/>
    </location>
    <ligand>
        <name>substrate</name>
    </ligand>
</feature>
<feature type="binding site" evidence="1">
    <location>
        <position position="215"/>
    </location>
    <ligand>
        <name>NAD(+)</name>
        <dbReference type="ChEBI" id="CHEBI:57540"/>
    </ligand>
</feature>
<feature type="binding site" evidence="1">
    <location>
        <begin position="340"/>
        <end position="341"/>
    </location>
    <ligand>
        <name>substrate</name>
    </ligand>
</feature>
<feature type="binding site" evidence="1">
    <location>
        <position position="340"/>
    </location>
    <ligand>
        <name>NAD(+)</name>
        <dbReference type="ChEBI" id="CHEBI:57540"/>
    </ligand>
</feature>
<feature type="binding site" evidence="1">
    <location>
        <position position="369"/>
    </location>
    <ligand>
        <name>NAD(+)</name>
        <dbReference type="ChEBI" id="CHEBI:57540"/>
    </ligand>
</feature>
<gene>
    <name type="primary">GPD</name>
</gene>
<comment type="catalytic activity">
    <reaction>
        <text>sn-glycerol 3-phosphate + NAD(+) = dihydroxyacetone phosphate + NADH + H(+)</text>
        <dbReference type="Rhea" id="RHEA:11092"/>
        <dbReference type="ChEBI" id="CHEBI:15378"/>
        <dbReference type="ChEBI" id="CHEBI:57540"/>
        <dbReference type="ChEBI" id="CHEBI:57597"/>
        <dbReference type="ChEBI" id="CHEBI:57642"/>
        <dbReference type="ChEBI" id="CHEBI:57945"/>
        <dbReference type="EC" id="1.1.1.8"/>
    </reaction>
</comment>
<comment type="similarity">
    <text evidence="2">Belongs to the NAD-dependent glycerol-3-phosphate dehydrogenase family.</text>
</comment>
<name>GPD_LACTH</name>
<organism>
    <name type="scientific">Lachancea thermotolerans</name>
    <name type="common">Yeast</name>
    <name type="synonym">Kluyveromyces thermotolerans</name>
    <dbReference type="NCBI Taxonomy" id="381046"/>
    <lineage>
        <taxon>Eukaryota</taxon>
        <taxon>Fungi</taxon>
        <taxon>Dikarya</taxon>
        <taxon>Ascomycota</taxon>
        <taxon>Saccharomycotina</taxon>
        <taxon>Saccharomycetes</taxon>
        <taxon>Saccharomycetales</taxon>
        <taxon>Saccharomycetaceae</taxon>
        <taxon>Lachancea</taxon>
    </lineage>
</organism>
<sequence length="411" mass="45332">MFSISRITRTSSFTTQFRALYRFKHSARKLQSIPFSIYKKMSAADRLNQTHDILSESVQAVENPFKVTVIGSGNWGTTISKVVAENAALRPHLFVKRVDMWVFEETVDGQKLTEIINTKHQNVKYLPNIDLPENLVANPDLVSAVKDADILVFNIPHQFLPRIVSQLQGNIKKDARAISCLKGFDVSKDGVKLLSTYVTEKLGITCGALSGANLAPEVAKENWSETTVAYELPKDFKGEGKDVDHAVLKALFHRPYFHVNVIDDVAGISVAGALKNVVALGCGFVEGLGWGNNASAAIQRVGLGEIIKFGQMFFPDSRVETYYQESAGVADLITTCSGGRNVRVATHMAKTGKSAEECEKELLNGQSAQVFTHVRRSTSGWPSAVRPMNSFCSRPFTRLSTRTLLWTLCQT</sequence>
<evidence type="ECO:0000250" key="1">
    <source>
        <dbReference type="UniProtKB" id="P21695"/>
    </source>
</evidence>
<evidence type="ECO:0000305" key="2"/>
<keyword id="KW-0520">NAD</keyword>
<keyword id="KW-0560">Oxidoreductase</keyword>
<dbReference type="EC" id="1.1.1.8"/>
<dbReference type="EMBL" id="AY289713">
    <property type="protein sequence ID" value="AAP44104.1"/>
    <property type="molecule type" value="Genomic_DNA"/>
</dbReference>
<dbReference type="SMR" id="Q7ZA45"/>
<dbReference type="GO" id="GO:0005829">
    <property type="term" value="C:cytosol"/>
    <property type="evidence" value="ECO:0007669"/>
    <property type="project" value="TreeGrafter"/>
</dbReference>
<dbReference type="GO" id="GO:0005634">
    <property type="term" value="C:nucleus"/>
    <property type="evidence" value="ECO:0007669"/>
    <property type="project" value="TreeGrafter"/>
</dbReference>
<dbReference type="GO" id="GO:0141152">
    <property type="term" value="F:glycerol-3-phosphate dehydrogenase (NAD+) activity"/>
    <property type="evidence" value="ECO:0007669"/>
    <property type="project" value="UniProtKB-EC"/>
</dbReference>
<dbReference type="GO" id="GO:0051287">
    <property type="term" value="F:NAD binding"/>
    <property type="evidence" value="ECO:0007669"/>
    <property type="project" value="InterPro"/>
</dbReference>
<dbReference type="GO" id="GO:0042803">
    <property type="term" value="F:protein homodimerization activity"/>
    <property type="evidence" value="ECO:0007669"/>
    <property type="project" value="InterPro"/>
</dbReference>
<dbReference type="GO" id="GO:0005975">
    <property type="term" value="P:carbohydrate metabolic process"/>
    <property type="evidence" value="ECO:0007669"/>
    <property type="project" value="InterPro"/>
</dbReference>
<dbReference type="GO" id="GO:0046168">
    <property type="term" value="P:glycerol-3-phosphate catabolic process"/>
    <property type="evidence" value="ECO:0007669"/>
    <property type="project" value="InterPro"/>
</dbReference>
<dbReference type="FunFam" id="1.10.1040.10:FF:000004">
    <property type="entry name" value="Glycerol-3-phosphate dehydrogenase [NAD(+)]"/>
    <property type="match status" value="1"/>
</dbReference>
<dbReference type="FunFam" id="3.40.50.720:FF:000294">
    <property type="entry name" value="Glycerol-3-phosphate dehydrogenase [NAD(+)]"/>
    <property type="match status" value="1"/>
</dbReference>
<dbReference type="Gene3D" id="1.10.1040.10">
    <property type="entry name" value="N-(1-d-carboxylethyl)-l-norvaline Dehydrogenase, domain 2"/>
    <property type="match status" value="1"/>
</dbReference>
<dbReference type="Gene3D" id="3.40.50.720">
    <property type="entry name" value="NAD(P)-binding Rossmann-like Domain"/>
    <property type="match status" value="1"/>
</dbReference>
<dbReference type="InterPro" id="IPR008927">
    <property type="entry name" value="6-PGluconate_DH-like_C_sf"/>
</dbReference>
<dbReference type="InterPro" id="IPR013328">
    <property type="entry name" value="6PGD_dom2"/>
</dbReference>
<dbReference type="InterPro" id="IPR006168">
    <property type="entry name" value="G3P_DH_NAD-dep"/>
</dbReference>
<dbReference type="InterPro" id="IPR006109">
    <property type="entry name" value="G3P_DH_NAD-dep_C"/>
</dbReference>
<dbReference type="InterPro" id="IPR017751">
    <property type="entry name" value="G3P_DH_NAD-dep_euk"/>
</dbReference>
<dbReference type="InterPro" id="IPR011128">
    <property type="entry name" value="G3P_DH_NAD-dep_N"/>
</dbReference>
<dbReference type="InterPro" id="IPR036291">
    <property type="entry name" value="NAD(P)-bd_dom_sf"/>
</dbReference>
<dbReference type="NCBIfam" id="TIGR03376">
    <property type="entry name" value="glycerol3P_DH"/>
    <property type="match status" value="1"/>
</dbReference>
<dbReference type="PANTHER" id="PTHR11728">
    <property type="entry name" value="GLYCEROL-3-PHOSPHATE DEHYDROGENASE"/>
    <property type="match status" value="1"/>
</dbReference>
<dbReference type="PANTHER" id="PTHR11728:SF8">
    <property type="entry name" value="GLYCEROL-3-PHOSPHATE DEHYDROGENASE [NAD(+)]-RELATED"/>
    <property type="match status" value="1"/>
</dbReference>
<dbReference type="Pfam" id="PF07479">
    <property type="entry name" value="NAD_Gly3P_dh_C"/>
    <property type="match status" value="1"/>
</dbReference>
<dbReference type="Pfam" id="PF01210">
    <property type="entry name" value="NAD_Gly3P_dh_N"/>
    <property type="match status" value="1"/>
</dbReference>
<dbReference type="PRINTS" id="PR00077">
    <property type="entry name" value="GPDHDRGNASE"/>
</dbReference>
<dbReference type="SUPFAM" id="SSF48179">
    <property type="entry name" value="6-phosphogluconate dehydrogenase C-terminal domain-like"/>
    <property type="match status" value="1"/>
</dbReference>
<dbReference type="SUPFAM" id="SSF51735">
    <property type="entry name" value="NAD(P)-binding Rossmann-fold domains"/>
    <property type="match status" value="1"/>
</dbReference>
<dbReference type="PROSITE" id="PS00957">
    <property type="entry name" value="NAD_G3PDH"/>
    <property type="match status" value="1"/>
</dbReference>
<accession>Q7ZA45</accession>
<protein>
    <recommendedName>
        <fullName>Glycerol-3-phosphate dehydrogenase [NAD(+)]</fullName>
        <ecNumber>1.1.1.8</ecNumber>
    </recommendedName>
</protein>
<reference key="1">
    <citation type="journal article" date="2004" name="FEMS Yeast Res.">
        <title>Yeast orthologues associated with glycerol transport and metabolism.</title>
        <authorList>
            <person name="Neves L."/>
            <person name="Oliveira R."/>
            <person name="Lucas C."/>
        </authorList>
    </citation>
    <scope>NUCLEOTIDE SEQUENCE [GENOMIC DNA]</scope>
    <source>
        <strain>CBS 137</strain>
    </source>
</reference>
<proteinExistence type="inferred from homology"/>